<accession>Q8CQ47</accession>
<feature type="chain" id="PRO_0000372243" description="Putative antiporter subunit mnhD2">
    <location>
        <begin position="1"/>
        <end position="500"/>
    </location>
</feature>
<feature type="transmembrane region" description="Helical" evidence="2">
    <location>
        <begin position="2"/>
        <end position="22"/>
    </location>
</feature>
<feature type="transmembrane region" description="Helical" evidence="2">
    <location>
        <begin position="32"/>
        <end position="52"/>
    </location>
</feature>
<feature type="transmembrane region" description="Helical" evidence="2">
    <location>
        <begin position="78"/>
        <end position="98"/>
    </location>
</feature>
<feature type="transmembrane region" description="Helical" evidence="2">
    <location>
        <begin position="108"/>
        <end position="128"/>
    </location>
</feature>
<feature type="transmembrane region" description="Helical" evidence="2">
    <location>
        <begin position="130"/>
        <end position="150"/>
    </location>
</feature>
<feature type="transmembrane region" description="Helical" evidence="2">
    <location>
        <begin position="161"/>
        <end position="181"/>
    </location>
</feature>
<feature type="transmembrane region" description="Helical" evidence="2">
    <location>
        <begin position="209"/>
        <end position="229"/>
    </location>
</feature>
<feature type="transmembrane region" description="Helical" evidence="2">
    <location>
        <begin position="240"/>
        <end position="260"/>
    </location>
</feature>
<feature type="transmembrane region" description="Helical" evidence="2">
    <location>
        <begin position="273"/>
        <end position="293"/>
    </location>
</feature>
<feature type="transmembrane region" description="Helical" evidence="2">
    <location>
        <begin position="308"/>
        <end position="328"/>
    </location>
</feature>
<feature type="transmembrane region" description="Helical" evidence="2">
    <location>
        <begin position="330"/>
        <end position="350"/>
    </location>
</feature>
<feature type="transmembrane region" description="Helical" evidence="2">
    <location>
        <begin position="368"/>
        <end position="388"/>
    </location>
</feature>
<feature type="transmembrane region" description="Helical" evidence="2">
    <location>
        <begin position="403"/>
        <end position="423"/>
    </location>
</feature>
<feature type="transmembrane region" description="Helical" evidence="2">
    <location>
        <begin position="450"/>
        <end position="470"/>
    </location>
</feature>
<reference key="1">
    <citation type="journal article" date="2003" name="Mol. Microbiol.">
        <title>Genome-based analysis of virulence genes in a non-biofilm-forming Staphylococcus epidermidis strain (ATCC 12228).</title>
        <authorList>
            <person name="Zhang Y.-Q."/>
            <person name="Ren S.-X."/>
            <person name="Li H.-L."/>
            <person name="Wang Y.-X."/>
            <person name="Fu G."/>
            <person name="Yang J."/>
            <person name="Qin Z.-Q."/>
            <person name="Miao Y.-G."/>
            <person name="Wang W.-Y."/>
            <person name="Chen R.-S."/>
            <person name="Shen Y."/>
            <person name="Chen Z."/>
            <person name="Yuan Z.-H."/>
            <person name="Zhao G.-P."/>
            <person name="Qu D."/>
            <person name="Danchin A."/>
            <person name="Wen Y.-M."/>
        </authorList>
    </citation>
    <scope>NUCLEOTIDE SEQUENCE [LARGE SCALE GENOMIC DNA]</scope>
    <source>
        <strain>ATCC 12228 / FDA PCI 1200</strain>
    </source>
</reference>
<dbReference type="EMBL" id="AE015929">
    <property type="protein sequence ID" value="AAO03997.1"/>
    <property type="molecule type" value="Genomic_DNA"/>
</dbReference>
<dbReference type="RefSeq" id="NP_763955.1">
    <property type="nucleotide sequence ID" value="NC_004461.1"/>
</dbReference>
<dbReference type="RefSeq" id="WP_011082609.1">
    <property type="nucleotide sequence ID" value="NZ_WBME01000020.1"/>
</dbReference>
<dbReference type="SMR" id="Q8CQ47"/>
<dbReference type="GeneID" id="50019443"/>
<dbReference type="KEGG" id="sep:SE_0400"/>
<dbReference type="PATRIC" id="fig|176280.10.peg.374"/>
<dbReference type="eggNOG" id="COG0651">
    <property type="taxonomic scope" value="Bacteria"/>
</dbReference>
<dbReference type="HOGENOM" id="CLU_007100_9_2_9"/>
<dbReference type="OrthoDB" id="9811718at2"/>
<dbReference type="Proteomes" id="UP000001411">
    <property type="component" value="Chromosome"/>
</dbReference>
<dbReference type="GO" id="GO:0005886">
    <property type="term" value="C:plasma membrane"/>
    <property type="evidence" value="ECO:0007669"/>
    <property type="project" value="UniProtKB-SubCell"/>
</dbReference>
<dbReference type="GO" id="GO:0015297">
    <property type="term" value="F:antiporter activity"/>
    <property type="evidence" value="ECO:0007669"/>
    <property type="project" value="UniProtKB-KW"/>
</dbReference>
<dbReference type="GO" id="GO:0008137">
    <property type="term" value="F:NADH dehydrogenase (ubiquinone) activity"/>
    <property type="evidence" value="ECO:0007669"/>
    <property type="project" value="InterPro"/>
</dbReference>
<dbReference type="GO" id="GO:0042773">
    <property type="term" value="P:ATP synthesis coupled electron transport"/>
    <property type="evidence" value="ECO:0007669"/>
    <property type="project" value="InterPro"/>
</dbReference>
<dbReference type="InterPro" id="IPR050586">
    <property type="entry name" value="CPA3_Na-H_Antiporter_D"/>
</dbReference>
<dbReference type="InterPro" id="IPR003918">
    <property type="entry name" value="NADH_UbQ_OxRdtase"/>
</dbReference>
<dbReference type="InterPro" id="IPR001750">
    <property type="entry name" value="ND/Mrp_TM"/>
</dbReference>
<dbReference type="NCBIfam" id="NF009306">
    <property type="entry name" value="PRK12663.1"/>
    <property type="match status" value="1"/>
</dbReference>
<dbReference type="PANTHER" id="PTHR42703:SF1">
    <property type="entry name" value="NA(+)_H(+) ANTIPORTER SUBUNIT D1"/>
    <property type="match status" value="1"/>
</dbReference>
<dbReference type="PANTHER" id="PTHR42703">
    <property type="entry name" value="NADH DEHYDROGENASE"/>
    <property type="match status" value="1"/>
</dbReference>
<dbReference type="Pfam" id="PF00361">
    <property type="entry name" value="Proton_antipo_M"/>
    <property type="match status" value="1"/>
</dbReference>
<dbReference type="PRINTS" id="PR01437">
    <property type="entry name" value="NUOXDRDTASE4"/>
</dbReference>
<protein>
    <recommendedName>
        <fullName>Putative antiporter subunit mnhD2</fullName>
    </recommendedName>
    <alternativeName>
        <fullName>Mrp complex subunit D2</fullName>
    </alternativeName>
    <alternativeName>
        <fullName>Putative NADH-ubiquinone oxidoreductase subunit mnhD2</fullName>
    </alternativeName>
</protein>
<gene>
    <name type="primary">mnhD2</name>
    <name type="synonym">mrpD2</name>
    <name type="ordered locus">SE_0400</name>
</gene>
<keyword id="KW-0050">Antiport</keyword>
<keyword id="KW-1003">Cell membrane</keyword>
<keyword id="KW-0406">Ion transport</keyword>
<keyword id="KW-0472">Membrane</keyword>
<keyword id="KW-0812">Transmembrane</keyword>
<keyword id="KW-1133">Transmembrane helix</keyword>
<keyword id="KW-0813">Transport</keyword>
<sequence length="500" mass="55211">MMSNLIILPMLLPFVCALILVFTKNKNRISKILSITTMIVNTMISIALLIYVVNHKPITLDFGGWKAPFGIQFLGDSLSLLMVSVSSFVVTLIMAYGFGRGEKRVNRFHLPTFILLLTVGVIGSFLTSDLFNLYVMFEIMLLASFVLVTLGQSVEQLRAAIVYVVLNILGSWLLLLGIGMLYKTVGTLNFSHLAMRLNHMENNQTITMISLVFLVAFSSKAALVIFMWLPKAYAVLNTELAALFAALMTKVGAYALIRFFTLLFDHHPSVTHTLLVFMACITMIIGAFGVIAYKDIKKIAAYQVILSIGFIILGLGSHTISGVNGAIFYLANDIIVKTLLFFVIGSLVYMSGYRNYQYLSGLAKREPFFGVAFVVVIFAIGGVPPFSGFPGKVLIFQGAITNGNYIGLALMIVTSLIAMYSLFRVMFIMYFGDADGEQVQFRPLPIYRKGLLSVLVVVVLAMGIAAPVVLKVTEDATNLNMKEDVFQKNVNTHLKEVNHK</sequence>
<organism>
    <name type="scientific">Staphylococcus epidermidis (strain ATCC 12228 / FDA PCI 1200)</name>
    <dbReference type="NCBI Taxonomy" id="176280"/>
    <lineage>
        <taxon>Bacteria</taxon>
        <taxon>Bacillati</taxon>
        <taxon>Bacillota</taxon>
        <taxon>Bacilli</taxon>
        <taxon>Bacillales</taxon>
        <taxon>Staphylococcaceae</taxon>
        <taxon>Staphylococcus</taxon>
    </lineage>
</organism>
<name>MNHD2_STAES</name>
<evidence type="ECO:0000250" key="1"/>
<evidence type="ECO:0000255" key="2"/>
<evidence type="ECO:0000305" key="3"/>
<comment type="subunit">
    <text evidence="1">May form a heterooligomeric complex that consists of seven subunits: mnhA2, mnhB2, mnhC2, mnhD2, mnhE2, mnhF2 and mnhG2.</text>
</comment>
<comment type="subcellular location">
    <subcellularLocation>
        <location evidence="3">Cell membrane</location>
        <topology evidence="3">Multi-pass membrane protein</topology>
    </subcellularLocation>
</comment>
<comment type="similarity">
    <text evidence="3">Belongs to the CPA3 antiporters (TC 2.A.63) subunit D family.</text>
</comment>
<proteinExistence type="inferred from homology"/>